<feature type="chain" id="PRO_1000099260" description="Diaminopimelate epimerase">
    <location>
        <begin position="1"/>
        <end position="293"/>
    </location>
</feature>
<feature type="active site" description="Proton donor" evidence="1">
    <location>
        <position position="76"/>
    </location>
</feature>
<feature type="active site" description="Proton acceptor" evidence="1">
    <location>
        <position position="224"/>
    </location>
</feature>
<feature type="binding site" evidence="1">
    <location>
        <position position="17"/>
    </location>
    <ligand>
        <name>substrate</name>
    </ligand>
</feature>
<feature type="binding site" evidence="1">
    <location>
        <position position="47"/>
    </location>
    <ligand>
        <name>substrate</name>
    </ligand>
</feature>
<feature type="binding site" evidence="1">
    <location>
        <position position="67"/>
    </location>
    <ligand>
        <name>substrate</name>
    </ligand>
</feature>
<feature type="binding site" evidence="1">
    <location>
        <begin position="77"/>
        <end position="78"/>
    </location>
    <ligand>
        <name>substrate</name>
    </ligand>
</feature>
<feature type="binding site" evidence="1">
    <location>
        <position position="164"/>
    </location>
    <ligand>
        <name>substrate</name>
    </ligand>
</feature>
<feature type="binding site" evidence="1">
    <location>
        <position position="197"/>
    </location>
    <ligand>
        <name>substrate</name>
    </ligand>
</feature>
<feature type="binding site" evidence="1">
    <location>
        <begin position="215"/>
        <end position="216"/>
    </location>
    <ligand>
        <name>substrate</name>
    </ligand>
</feature>
<feature type="binding site" evidence="1">
    <location>
        <begin position="225"/>
        <end position="226"/>
    </location>
    <ligand>
        <name>substrate</name>
    </ligand>
</feature>
<feature type="site" description="Could be important to modulate the pK values of the two catalytic cysteine residues" evidence="1">
    <location>
        <position position="166"/>
    </location>
</feature>
<feature type="site" description="Could be important to modulate the pK values of the two catalytic cysteine residues" evidence="1">
    <location>
        <position position="215"/>
    </location>
</feature>
<accession>B3Q862</accession>
<dbReference type="EC" id="5.1.1.7" evidence="1"/>
<dbReference type="EMBL" id="CP001096">
    <property type="protein sequence ID" value="ACE98811.1"/>
    <property type="molecule type" value="Genomic_DNA"/>
</dbReference>
<dbReference type="RefSeq" id="WP_012494013.1">
    <property type="nucleotide sequence ID" value="NC_011004.1"/>
</dbReference>
<dbReference type="SMR" id="B3Q862"/>
<dbReference type="KEGG" id="rpt:Rpal_0251"/>
<dbReference type="HOGENOM" id="CLU_053306_1_0_5"/>
<dbReference type="OrthoDB" id="9805408at2"/>
<dbReference type="UniPathway" id="UPA00034">
    <property type="reaction ID" value="UER00025"/>
</dbReference>
<dbReference type="Proteomes" id="UP000001725">
    <property type="component" value="Chromosome"/>
</dbReference>
<dbReference type="GO" id="GO:0005829">
    <property type="term" value="C:cytosol"/>
    <property type="evidence" value="ECO:0007669"/>
    <property type="project" value="TreeGrafter"/>
</dbReference>
<dbReference type="GO" id="GO:0008837">
    <property type="term" value="F:diaminopimelate epimerase activity"/>
    <property type="evidence" value="ECO:0007669"/>
    <property type="project" value="UniProtKB-UniRule"/>
</dbReference>
<dbReference type="GO" id="GO:0009089">
    <property type="term" value="P:lysine biosynthetic process via diaminopimelate"/>
    <property type="evidence" value="ECO:0007669"/>
    <property type="project" value="UniProtKB-UniRule"/>
</dbReference>
<dbReference type="FunFam" id="3.10.310.10:FF:000004">
    <property type="entry name" value="Diaminopimelate epimerase"/>
    <property type="match status" value="1"/>
</dbReference>
<dbReference type="Gene3D" id="3.10.310.10">
    <property type="entry name" value="Diaminopimelate Epimerase, Chain A, domain 1"/>
    <property type="match status" value="2"/>
</dbReference>
<dbReference type="HAMAP" id="MF_00197">
    <property type="entry name" value="DAP_epimerase"/>
    <property type="match status" value="1"/>
</dbReference>
<dbReference type="InterPro" id="IPR018510">
    <property type="entry name" value="DAP_epimerase_AS"/>
</dbReference>
<dbReference type="InterPro" id="IPR001653">
    <property type="entry name" value="DAP_epimerase_DapF"/>
</dbReference>
<dbReference type="NCBIfam" id="TIGR00652">
    <property type="entry name" value="DapF"/>
    <property type="match status" value="1"/>
</dbReference>
<dbReference type="PANTHER" id="PTHR31689:SF0">
    <property type="entry name" value="DIAMINOPIMELATE EPIMERASE"/>
    <property type="match status" value="1"/>
</dbReference>
<dbReference type="PANTHER" id="PTHR31689">
    <property type="entry name" value="DIAMINOPIMELATE EPIMERASE, CHLOROPLASTIC"/>
    <property type="match status" value="1"/>
</dbReference>
<dbReference type="Pfam" id="PF01678">
    <property type="entry name" value="DAP_epimerase"/>
    <property type="match status" value="2"/>
</dbReference>
<dbReference type="SUPFAM" id="SSF54506">
    <property type="entry name" value="Diaminopimelate epimerase-like"/>
    <property type="match status" value="2"/>
</dbReference>
<dbReference type="PROSITE" id="PS01326">
    <property type="entry name" value="DAP_EPIMERASE"/>
    <property type="match status" value="1"/>
</dbReference>
<name>DAPF_RHOPT</name>
<keyword id="KW-0028">Amino-acid biosynthesis</keyword>
<keyword id="KW-0963">Cytoplasm</keyword>
<keyword id="KW-0413">Isomerase</keyword>
<keyword id="KW-0457">Lysine biosynthesis</keyword>
<organism>
    <name type="scientific">Rhodopseudomonas palustris (strain TIE-1)</name>
    <dbReference type="NCBI Taxonomy" id="395960"/>
    <lineage>
        <taxon>Bacteria</taxon>
        <taxon>Pseudomonadati</taxon>
        <taxon>Pseudomonadota</taxon>
        <taxon>Alphaproteobacteria</taxon>
        <taxon>Hyphomicrobiales</taxon>
        <taxon>Nitrobacteraceae</taxon>
        <taxon>Rhodopseudomonas</taxon>
    </lineage>
</organism>
<comment type="function">
    <text evidence="1">Catalyzes the stereoinversion of LL-2,6-diaminopimelate (L,L-DAP) to meso-diaminopimelate (meso-DAP), a precursor of L-lysine and an essential component of the bacterial peptidoglycan.</text>
</comment>
<comment type="catalytic activity">
    <reaction evidence="1">
        <text>(2S,6S)-2,6-diaminopimelate = meso-2,6-diaminopimelate</text>
        <dbReference type="Rhea" id="RHEA:15393"/>
        <dbReference type="ChEBI" id="CHEBI:57609"/>
        <dbReference type="ChEBI" id="CHEBI:57791"/>
        <dbReference type="EC" id="5.1.1.7"/>
    </reaction>
</comment>
<comment type="pathway">
    <text evidence="1">Amino-acid biosynthesis; L-lysine biosynthesis via DAP pathway; DL-2,6-diaminopimelate from LL-2,6-diaminopimelate: step 1/1.</text>
</comment>
<comment type="subunit">
    <text evidence="1">Homodimer.</text>
</comment>
<comment type="subcellular location">
    <subcellularLocation>
        <location evidence="1">Cytoplasm</location>
    </subcellularLocation>
</comment>
<comment type="similarity">
    <text evidence="1">Belongs to the diaminopimelate epimerase family.</text>
</comment>
<gene>
    <name evidence="1" type="primary">dapF</name>
    <name type="ordered locus">Rpal_0251</name>
</gene>
<evidence type="ECO:0000255" key="1">
    <source>
        <dbReference type="HAMAP-Rule" id="MF_00197"/>
    </source>
</evidence>
<proteinExistence type="inferred from homology"/>
<sequence length="293" mass="31904">MSALDNRLFAKMNGIGNEIVVVDLRDQPAPVTPADARAVAAHVPYDQLMLLQPARLPGTEAFVRIYNNDGSESGACGNGMRCVARQMFAGSDKNGLTFETRAGLLNCWRGPADGLYTVDMGEPKFGWQDIPLAEEFRDTRMIELQIGPIDAPVLHTPSVVSMGNPHAIFWVDDVNAYDLGRFGPLLENHPIFPERANITLAHIVDRQHITMRTWERGAGLTKACGSAACATAVAAARLKRTDRTVEMTLPGGQLTIEWRDNDNHVLMTGGAEFEFEGRFDPALFAGALDPTGA</sequence>
<reference key="1">
    <citation type="submission" date="2008-05" db="EMBL/GenBank/DDBJ databases">
        <title>Complete sequence of Rhodopseudomonas palustris TIE-1.</title>
        <authorList>
            <consortium name="US DOE Joint Genome Institute"/>
            <person name="Lucas S."/>
            <person name="Copeland A."/>
            <person name="Lapidus A."/>
            <person name="Glavina del Rio T."/>
            <person name="Dalin E."/>
            <person name="Tice H."/>
            <person name="Pitluck S."/>
            <person name="Chain P."/>
            <person name="Malfatti S."/>
            <person name="Shin M."/>
            <person name="Vergez L."/>
            <person name="Lang D."/>
            <person name="Schmutz J."/>
            <person name="Larimer F."/>
            <person name="Land M."/>
            <person name="Hauser L."/>
            <person name="Kyrpides N."/>
            <person name="Mikhailova N."/>
            <person name="Emerson D."/>
            <person name="Newman D.K."/>
            <person name="Roden E."/>
            <person name="Richardson P."/>
        </authorList>
    </citation>
    <scope>NUCLEOTIDE SEQUENCE [LARGE SCALE GENOMIC DNA]</scope>
    <source>
        <strain>TIE-1</strain>
    </source>
</reference>
<protein>
    <recommendedName>
        <fullName evidence="1">Diaminopimelate epimerase</fullName>
        <shortName evidence="1">DAP epimerase</shortName>
        <ecNumber evidence="1">5.1.1.7</ecNumber>
    </recommendedName>
    <alternativeName>
        <fullName evidence="1">PLP-independent amino acid racemase</fullName>
    </alternativeName>
</protein>